<evidence type="ECO:0000250" key="1"/>
<evidence type="ECO:0000250" key="2">
    <source>
        <dbReference type="UniProtKB" id="P19447"/>
    </source>
</evidence>
<evidence type="ECO:0000255" key="3">
    <source>
        <dbReference type="PROSITE-ProRule" id="PRU00541"/>
    </source>
</evidence>
<evidence type="ECO:0000255" key="4">
    <source>
        <dbReference type="PROSITE-ProRule" id="PRU00542"/>
    </source>
</evidence>
<evidence type="ECO:0000256" key="5">
    <source>
        <dbReference type="SAM" id="MobiDB-lite"/>
    </source>
</evidence>
<evidence type="ECO:0000269" key="6">
    <source>
    </source>
</evidence>
<evidence type="ECO:0000269" key="7">
    <source>
    </source>
</evidence>
<evidence type="ECO:0000269" key="8">
    <source>
    </source>
</evidence>
<evidence type="ECO:0000269" key="9">
    <source>
    </source>
</evidence>
<evidence type="ECO:0000303" key="10">
    <source>
    </source>
</evidence>
<evidence type="ECO:0000305" key="11"/>
<feature type="chain" id="PRO_0000376006" description="General transcription and DNA repair factor IIH helicase/translocase subunit XPB">
    <location>
        <begin position="1"/>
        <end position="800"/>
    </location>
</feature>
<feature type="domain" description="Helicase ATP-binding" evidence="3">
    <location>
        <begin position="329"/>
        <end position="491"/>
    </location>
</feature>
<feature type="domain" description="Helicase C-terminal" evidence="4">
    <location>
        <begin position="546"/>
        <end position="704"/>
    </location>
</feature>
<feature type="region of interest" description="Disordered" evidence="5">
    <location>
        <begin position="1"/>
        <end position="27"/>
    </location>
</feature>
<feature type="region of interest" description="Disordered" evidence="5">
    <location>
        <begin position="743"/>
        <end position="769"/>
    </location>
</feature>
<feature type="short sequence motif" description="DEVH box">
    <location>
        <begin position="444"/>
        <end position="447"/>
    </location>
</feature>
<feature type="compositionally biased region" description="Polar residues" evidence="5">
    <location>
        <begin position="17"/>
        <end position="27"/>
    </location>
</feature>
<feature type="compositionally biased region" description="Polar residues" evidence="5">
    <location>
        <begin position="749"/>
        <end position="764"/>
    </location>
</feature>
<feature type="binding site" evidence="3">
    <location>
        <begin position="342"/>
        <end position="349"/>
    </location>
    <ligand>
        <name>ATP</name>
        <dbReference type="ChEBI" id="CHEBI:30616"/>
    </ligand>
</feature>
<feature type="mutagenesis site" description="Lethal, cells expressing only this form are inviable." evidence="9">
    <location>
        <begin position="706"/>
        <end position="800"/>
    </location>
</feature>
<feature type="mutagenesis site" description="Increased sensitivity to UV light, normal UV-induced expression of repair genes, obvious defect in growth rate or development." evidence="9">
    <location>
        <begin position="755"/>
        <end position="800"/>
    </location>
</feature>
<sequence>MSSGDSNLKRRRGGNTGQSSKSYNTWTDYEEDLEESGEFNQSIKKTTNTSSATLTSSEEKGSLLDYSKRCILKQDNKSRPIWVCPDGHIFLETFSAIYKQASDFLVAIAEPVCRPQNIHEYQLTPYSLYAAVSVGLETNDIITVLGRLSKLALPKEVEQFVRQCTQSYGKVKLVLQKNKYFVESAYPEVLEFLLKDSSIATARIKPTLEESVVDPKTGFIINKEVVTGAQISGGLQANQSLDPVLKNDALSNLLEEEEEDTVNNSDQHFHSFEIDPQQVEEVKKRCIQLDYPVLEEYDFRNDTVNPNLNIDLKPTTMIRPYQEKSLSKMFGNGRARSGIIVLPCGAGKSLSGITAACTVKKSILVLCTSAVSVEQWKYQFKLWSNIEERQISKFTSDNKEKISNVAGVTITTYTMVAFGGRRSAESLKIMNEITNREWGLVLLDEVHVVPAAMFRKVLTVTKAHCKLGLTATLLREDEKIQDLNFLIGPKLYEANWLDLQKAGFLANVSCSEVWCPMTAEFYKEYLINDSQGKKKLLYTMNPNKFRACEYLIRFHEQRGDKIIVFSDNVYALQKYAKGLGRYFIYGPTSGHERMSILSKFQHDPTVRTIFISKVGDTSIDIPEATVIIQVSSHYGSRRQEAQRLGRILRPKPKSDGLYNAFFYSLVSKDTQEMYYSTKRQQFLIDQGYSFKVISELPGIDQEVNLKYSSKQDQLDLLAQVLGEGEDSGKNEILEEDFDDITRGAKKSKSSAPTVSRTTGGSTRALSGGNDMNYMEYQAPAIYKSIPTQHALFKQRAKNKQ</sequence>
<reference key="1">
    <citation type="journal article" date="1997" name="Nucleic Acids Res.">
        <title>Differential developmental expression of the rep B and rep D xeroderma pigmentosum related DNA helicase genes from Dictyostelium discoideum.</title>
        <authorList>
            <person name="Lee S.-K."/>
            <person name="Yu S.-L."/>
            <person name="Garcia M.X.U."/>
            <person name="Alexander H."/>
            <person name="Alexander S."/>
        </authorList>
    </citation>
    <scope>NUCLEOTIDE SEQUENCE [GENOMIC DNA]</scope>
    <scope>DEVELOPMENTAL STAGE</scope>
    <source>
        <strain>AX4</strain>
    </source>
</reference>
<reference key="2">
    <citation type="journal article" date="2005" name="Nature">
        <title>The genome of the social amoeba Dictyostelium discoideum.</title>
        <authorList>
            <person name="Eichinger L."/>
            <person name="Pachebat J.A."/>
            <person name="Gloeckner G."/>
            <person name="Rajandream M.A."/>
            <person name="Sucgang R."/>
            <person name="Berriman M."/>
            <person name="Song J."/>
            <person name="Olsen R."/>
            <person name="Szafranski K."/>
            <person name="Xu Q."/>
            <person name="Tunggal B."/>
            <person name="Kummerfeld S."/>
            <person name="Madera M."/>
            <person name="Konfortov B.A."/>
            <person name="Rivero F."/>
            <person name="Bankier A.T."/>
            <person name="Lehmann R."/>
            <person name="Hamlin N."/>
            <person name="Davies R."/>
            <person name="Gaudet P."/>
            <person name="Fey P."/>
            <person name="Pilcher K."/>
            <person name="Chen G."/>
            <person name="Saunders D."/>
            <person name="Sodergren E.J."/>
            <person name="Davis P."/>
            <person name="Kerhornou A."/>
            <person name="Nie X."/>
            <person name="Hall N."/>
            <person name="Anjard C."/>
            <person name="Hemphill L."/>
            <person name="Bason N."/>
            <person name="Farbrother P."/>
            <person name="Desany B."/>
            <person name="Just E."/>
            <person name="Morio T."/>
            <person name="Rost R."/>
            <person name="Churcher C.M."/>
            <person name="Cooper J."/>
            <person name="Haydock S."/>
            <person name="van Driessche N."/>
            <person name="Cronin A."/>
            <person name="Goodhead I."/>
            <person name="Muzny D.M."/>
            <person name="Mourier T."/>
            <person name="Pain A."/>
            <person name="Lu M."/>
            <person name="Harper D."/>
            <person name="Lindsay R."/>
            <person name="Hauser H."/>
            <person name="James K.D."/>
            <person name="Quiles M."/>
            <person name="Madan Babu M."/>
            <person name="Saito T."/>
            <person name="Buchrieser C."/>
            <person name="Wardroper A."/>
            <person name="Felder M."/>
            <person name="Thangavelu M."/>
            <person name="Johnson D."/>
            <person name="Knights A."/>
            <person name="Loulseged H."/>
            <person name="Mungall K.L."/>
            <person name="Oliver K."/>
            <person name="Price C."/>
            <person name="Quail M.A."/>
            <person name="Urushihara H."/>
            <person name="Hernandez J."/>
            <person name="Rabbinowitsch E."/>
            <person name="Steffen D."/>
            <person name="Sanders M."/>
            <person name="Ma J."/>
            <person name="Kohara Y."/>
            <person name="Sharp S."/>
            <person name="Simmonds M.N."/>
            <person name="Spiegler S."/>
            <person name="Tivey A."/>
            <person name="Sugano S."/>
            <person name="White B."/>
            <person name="Walker D."/>
            <person name="Woodward J.R."/>
            <person name="Winckler T."/>
            <person name="Tanaka Y."/>
            <person name="Shaulsky G."/>
            <person name="Schleicher M."/>
            <person name="Weinstock G.M."/>
            <person name="Rosenthal A."/>
            <person name="Cox E.C."/>
            <person name="Chisholm R.L."/>
            <person name="Gibbs R.A."/>
            <person name="Loomis W.F."/>
            <person name="Platzer M."/>
            <person name="Kay R.R."/>
            <person name="Williams J.G."/>
            <person name="Dear P.H."/>
            <person name="Noegel A.A."/>
            <person name="Barrell B.G."/>
            <person name="Kuspa A."/>
        </authorList>
    </citation>
    <scope>NUCLEOTIDE SEQUENCE [LARGE SCALE GENOMIC DNA]</scope>
    <source>
        <strain>AX4</strain>
    </source>
</reference>
<reference key="3">
    <citation type="journal article" date="1998" name="Biochim. Biophys. Acta">
        <title>A mutation in repB, the dictyostelium homolog of the human xeroderma pigmentosum B gene, has increased sensitivity to UV-light but normal morphogenesis.</title>
        <authorList>
            <person name="Lee S.-K."/>
            <person name="Yu S.-L."/>
            <person name="Alexander H."/>
            <person name="Alexander S."/>
        </authorList>
    </citation>
    <scope>MUTAGENESIS OF 755-SER--GLN-800 AND 706-LYS--GLN-800</scope>
    <scope>INDUCTION BY UV</scope>
</reference>
<reference key="4">
    <citation type="journal article" date="1998" name="Nucleic Acids Res.">
        <title>Rapid changes of nucleotide excision repair gene expression following UV-irradiation and cisplatin treatment of Dictyostelium discoideum.</title>
        <authorList>
            <person name="Yu S.-L."/>
            <person name="Lee S.-K."/>
            <person name="Alexander H."/>
            <person name="Alexander S."/>
        </authorList>
    </citation>
    <scope>INDUCTION</scope>
</reference>
<reference key="5">
    <citation type="journal article" date="2000" name="Biochim. Biophys. Acta">
        <title>Differential developmental expression and cell type specificity of Dictyostelium catalases and their response to oxidative stress and UV-light.</title>
        <authorList>
            <person name="Garcia M.X.U."/>
            <person name="Foote C."/>
            <person name="van Es S."/>
            <person name="Devreotes P.N."/>
            <person name="Alexander S."/>
            <person name="Alexander H."/>
        </authorList>
    </citation>
    <scope>INDUCTION</scope>
    <scope>DEVELOPMENTAL STAGE</scope>
</reference>
<comment type="function">
    <text evidence="2">ATP-dependent 3'-5' DNA helicase/translocase; binds dsDNA rather than ssDNA, unzipping it in a translocase rather than classical helicase activity (By similarity). Component of the general transcription and DNA repair factor IIH (TFIIH) core complex. When complexed to CDK-activating kinase (CAK), involved in RNA transcription by RNA polymerase II. The ATPase activity of XPB/ERCC3, but not its helicase activity, is required for DNA opening; it may wrap around the damaged DNA wedging it open, causing localized melting and twisting that allows XPD/ERCC2 helicase to anchor. The ATP-dependent helicase activity of XPB/ERCC3 may be required for promoter escape. Also involved in transcription-coupled nucleotide excision repair (NER) of damaged DNA. In NER, TFIIH acts by opening DNA around the lesion to allow the excision of the damaged oligonucleotide and its replacement by a new DNA fragment. The structure of the TFIIH transcription complex differs from the NER-TFIIH complex (By similarity).</text>
</comment>
<comment type="catalytic activity">
    <reaction evidence="2">
        <text>Couples ATP hydrolysis with the unwinding of duplex DNA by translocating in the 3'-5' direction.</text>
        <dbReference type="EC" id="5.6.2.4"/>
    </reaction>
</comment>
<comment type="catalytic activity">
    <reaction evidence="2">
        <text>ATP + H2O = ADP + phosphate + H(+)</text>
        <dbReference type="Rhea" id="RHEA:13065"/>
        <dbReference type="ChEBI" id="CHEBI:15377"/>
        <dbReference type="ChEBI" id="CHEBI:15378"/>
        <dbReference type="ChEBI" id="CHEBI:30616"/>
        <dbReference type="ChEBI" id="CHEBI:43474"/>
        <dbReference type="ChEBI" id="CHEBI:456216"/>
        <dbReference type="EC" id="5.6.2.4"/>
    </reaction>
</comment>
<comment type="subunit">
    <text evidence="2">Component of the 7-subunit TFIIH core complex composed of XPB/repB, XPD/repD, gtf2h1, gtf2h2, gtf2h3, gtf2h4 and gtf2h5, which is active in NER. The core complex associates with the 3-subunit CDK-activating kinase (CAK) module composed of cycH/cyclin H, cdk7 and mnat1 to form the 10-subunit holoenzyme (holo-TFIIH) active in transcription.</text>
</comment>
<comment type="subcellular location">
    <subcellularLocation>
        <location evidence="1">Nucleus</location>
    </subcellularLocation>
</comment>
<comment type="developmental stage">
    <text evidence="6 7">Constitutively expressed at low levels throughout development.</text>
</comment>
<comment type="induction">
    <text evidence="6 8 9">Up-regulated in a dose dependent manner following exposure to both UV light and cisplatin (PubMed:9649625, PubMed:9765592). Unaffected by exposure to hydrogen peroxide (PubMed:11004503).</text>
</comment>
<comment type="similarity">
    <text evidence="11">Belongs to the helicase family. RAD25/XPB subfamily.</text>
</comment>
<proteinExistence type="evidence at protein level"/>
<gene>
    <name evidence="10" type="primary">repB</name>
    <name type="synonym">ercc3</name>
    <name type="ORF">DDB_G0278729</name>
</gene>
<accession>O00835</accession>
<accession>Q54XI4</accession>
<protein>
    <recommendedName>
        <fullName>General transcription and DNA repair factor IIH helicase/translocase subunit XPB</fullName>
        <shortName>TFIIH subunit XPB</shortName>
        <ecNumber evidence="11">5.6.2.4</ecNumber>
    </recommendedName>
    <alternativeName>
        <fullName evidence="11">DNA 3'-5' helicase/translocase XPB</fullName>
    </alternativeName>
    <alternativeName>
        <fullName>DNA excision repair cross-complementing protein-3 homolog</fullName>
    </alternativeName>
    <alternativeName>
        <fullName>DNA repair helicase repB</fullName>
    </alternativeName>
    <alternativeName>
        <fullName>DNA repair protein B</fullName>
    </alternativeName>
</protein>
<keyword id="KW-0067">ATP-binding</keyword>
<keyword id="KW-0227">DNA damage</keyword>
<keyword id="KW-0234">DNA repair</keyword>
<keyword id="KW-0238">DNA-binding</keyword>
<keyword id="KW-0347">Helicase</keyword>
<keyword id="KW-0378">Hydrolase</keyword>
<keyword id="KW-0413">Isomerase</keyword>
<keyword id="KW-0547">Nucleotide-binding</keyword>
<keyword id="KW-0539">Nucleus</keyword>
<keyword id="KW-1185">Reference proteome</keyword>
<keyword id="KW-0804">Transcription</keyword>
<keyword id="KW-0805">Transcription regulation</keyword>
<dbReference type="EC" id="5.6.2.4" evidence="11"/>
<dbReference type="EMBL" id="U77065">
    <property type="protein sequence ID" value="AAB62732.1"/>
    <property type="molecule type" value="Genomic_DNA"/>
</dbReference>
<dbReference type="EMBL" id="AAFI02000024">
    <property type="protein sequence ID" value="EAL67966.1"/>
    <property type="molecule type" value="Genomic_DNA"/>
</dbReference>
<dbReference type="RefSeq" id="XP_647819.1">
    <property type="nucleotide sequence ID" value="XM_642727.1"/>
</dbReference>
<dbReference type="SMR" id="O00835"/>
<dbReference type="FunCoup" id="O00835">
    <property type="interactions" value="684"/>
</dbReference>
<dbReference type="STRING" id="44689.O00835"/>
<dbReference type="PaxDb" id="44689-DDB0214830"/>
<dbReference type="EnsemblProtists" id="EAL67966">
    <property type="protein sequence ID" value="EAL67966"/>
    <property type="gene ID" value="DDB_G0278729"/>
</dbReference>
<dbReference type="GeneID" id="8621779"/>
<dbReference type="KEGG" id="ddi:DDB_G0278729"/>
<dbReference type="dictyBase" id="DDB_G0278729">
    <property type="gene designation" value="repB"/>
</dbReference>
<dbReference type="VEuPathDB" id="AmoebaDB:DDB_G0278729"/>
<dbReference type="eggNOG" id="KOG1123">
    <property type="taxonomic scope" value="Eukaryota"/>
</dbReference>
<dbReference type="HOGENOM" id="CLU_008213_0_0_1"/>
<dbReference type="InParanoid" id="O00835"/>
<dbReference type="OMA" id="RCQEIDY"/>
<dbReference type="PhylomeDB" id="O00835"/>
<dbReference type="Reactome" id="R-DDI-113418">
    <property type="pathway name" value="Formation of the Early Elongation Complex"/>
</dbReference>
<dbReference type="Reactome" id="R-DDI-5696395">
    <property type="pathway name" value="Formation of Incision Complex in GG-NER"/>
</dbReference>
<dbReference type="Reactome" id="R-DDI-674695">
    <property type="pathway name" value="RNA Polymerase II Pre-transcription Events"/>
</dbReference>
<dbReference type="Reactome" id="R-DDI-6781823">
    <property type="pathway name" value="Formation of TC-NER Pre-Incision Complex"/>
</dbReference>
<dbReference type="Reactome" id="R-DDI-6782135">
    <property type="pathway name" value="Dual incision in TC-NER"/>
</dbReference>
<dbReference type="Reactome" id="R-DDI-6782210">
    <property type="pathway name" value="Gap-filling DNA repair synthesis and ligation in TC-NER"/>
</dbReference>
<dbReference type="Reactome" id="R-DDI-6796648">
    <property type="pathway name" value="TP53 Regulates Transcription of DNA Repair Genes"/>
</dbReference>
<dbReference type="Reactome" id="R-DDI-72086">
    <property type="pathway name" value="mRNA Capping"/>
</dbReference>
<dbReference type="Reactome" id="R-DDI-73772">
    <property type="pathway name" value="RNA Polymerase I Promoter Escape"/>
</dbReference>
<dbReference type="Reactome" id="R-DDI-73776">
    <property type="pathway name" value="RNA Polymerase II Promoter Escape"/>
</dbReference>
<dbReference type="Reactome" id="R-DDI-73779">
    <property type="pathway name" value="RNA Polymerase II Transcription Pre-Initiation And Promoter Opening"/>
</dbReference>
<dbReference type="Reactome" id="R-DDI-75953">
    <property type="pathway name" value="RNA Polymerase II Transcription Initiation"/>
</dbReference>
<dbReference type="Reactome" id="R-DDI-76042">
    <property type="pathway name" value="RNA Polymerase II Transcription Initiation And Promoter Clearance"/>
</dbReference>
<dbReference type="Reactome" id="R-DDI-77075">
    <property type="pathway name" value="RNA Pol II CTD phosphorylation and interaction with CE"/>
</dbReference>
<dbReference type="PRO" id="PR:O00835"/>
<dbReference type="Proteomes" id="UP000002195">
    <property type="component" value="Chromosome 3"/>
</dbReference>
<dbReference type="GO" id="GO:0000112">
    <property type="term" value="C:nucleotide-excision repair factor 3 complex"/>
    <property type="evidence" value="ECO:0000318"/>
    <property type="project" value="GO_Central"/>
</dbReference>
<dbReference type="GO" id="GO:0005675">
    <property type="term" value="C:transcription factor TFIIH holo complex"/>
    <property type="evidence" value="ECO:0000250"/>
    <property type="project" value="dictyBase"/>
</dbReference>
<dbReference type="GO" id="GO:0097550">
    <property type="term" value="C:transcription preinitiation complex"/>
    <property type="evidence" value="ECO:0000318"/>
    <property type="project" value="GO_Central"/>
</dbReference>
<dbReference type="GO" id="GO:0043138">
    <property type="term" value="F:3'-5' DNA helicase activity"/>
    <property type="evidence" value="ECO:0000318"/>
    <property type="project" value="GO_Central"/>
</dbReference>
<dbReference type="GO" id="GO:0005524">
    <property type="term" value="F:ATP binding"/>
    <property type="evidence" value="ECO:0007669"/>
    <property type="project" value="UniProtKB-KW"/>
</dbReference>
<dbReference type="GO" id="GO:0016887">
    <property type="term" value="F:ATP hydrolysis activity"/>
    <property type="evidence" value="ECO:0007669"/>
    <property type="project" value="RHEA"/>
</dbReference>
<dbReference type="GO" id="GO:0003677">
    <property type="term" value="F:DNA binding"/>
    <property type="evidence" value="ECO:0007669"/>
    <property type="project" value="UniProtKB-KW"/>
</dbReference>
<dbReference type="GO" id="GO:0006974">
    <property type="term" value="P:DNA damage response"/>
    <property type="evidence" value="ECO:0000270"/>
    <property type="project" value="dictyBase"/>
</dbReference>
<dbReference type="GO" id="GO:0006289">
    <property type="term" value="P:nucleotide-excision repair"/>
    <property type="evidence" value="ECO:0000250"/>
    <property type="project" value="dictyBase"/>
</dbReference>
<dbReference type="GO" id="GO:0006366">
    <property type="term" value="P:transcription by RNA polymerase II"/>
    <property type="evidence" value="ECO:0000250"/>
    <property type="project" value="dictyBase"/>
</dbReference>
<dbReference type="GO" id="GO:0006367">
    <property type="term" value="P:transcription initiation at RNA polymerase II promoter"/>
    <property type="evidence" value="ECO:0000318"/>
    <property type="project" value="GO_Central"/>
</dbReference>
<dbReference type="GO" id="GO:0009650">
    <property type="term" value="P:UV protection"/>
    <property type="evidence" value="ECO:0000315"/>
    <property type="project" value="dictyBase"/>
</dbReference>
<dbReference type="CDD" id="cd18029">
    <property type="entry name" value="DEXHc_XPB"/>
    <property type="match status" value="1"/>
</dbReference>
<dbReference type="CDD" id="cd18789">
    <property type="entry name" value="SF2_C_XPB"/>
    <property type="match status" value="1"/>
</dbReference>
<dbReference type="FunFam" id="3.40.50.300:FF:000077">
    <property type="entry name" value="Probable DNA repair helicase RAD25"/>
    <property type="match status" value="1"/>
</dbReference>
<dbReference type="FunFam" id="3.40.50.300:FF:000117">
    <property type="entry name" value="Putative DNA repair helicase rad25"/>
    <property type="match status" value="1"/>
</dbReference>
<dbReference type="Gene3D" id="3.40.50.300">
    <property type="entry name" value="P-loop containing nucleotide triphosphate hydrolases"/>
    <property type="match status" value="2"/>
</dbReference>
<dbReference type="InterPro" id="IPR050615">
    <property type="entry name" value="ATP-dep_DNA_Helicase"/>
</dbReference>
<dbReference type="InterPro" id="IPR032438">
    <property type="entry name" value="ERCC3_RAD25_C"/>
</dbReference>
<dbReference type="InterPro" id="IPR006935">
    <property type="entry name" value="Helicase/UvrB_N"/>
</dbReference>
<dbReference type="InterPro" id="IPR014001">
    <property type="entry name" value="Helicase_ATP-bd"/>
</dbReference>
<dbReference type="InterPro" id="IPR001650">
    <property type="entry name" value="Helicase_C-like"/>
</dbReference>
<dbReference type="InterPro" id="IPR027417">
    <property type="entry name" value="P-loop_NTPase"/>
</dbReference>
<dbReference type="InterPro" id="IPR001161">
    <property type="entry name" value="XPB/Ssl2"/>
</dbReference>
<dbReference type="InterPro" id="IPR032830">
    <property type="entry name" value="XPB/Ssl2_N"/>
</dbReference>
<dbReference type="NCBIfam" id="TIGR00603">
    <property type="entry name" value="rad25"/>
    <property type="match status" value="1"/>
</dbReference>
<dbReference type="PANTHER" id="PTHR11274:SF0">
    <property type="entry name" value="GENERAL TRANSCRIPTION AND DNA REPAIR FACTOR IIH HELICASE SUBUNIT XPB"/>
    <property type="match status" value="1"/>
</dbReference>
<dbReference type="PANTHER" id="PTHR11274">
    <property type="entry name" value="RAD25/XP-B DNA REPAIR HELICASE"/>
    <property type="match status" value="1"/>
</dbReference>
<dbReference type="Pfam" id="PF16203">
    <property type="entry name" value="ERCC3_RAD25_C"/>
    <property type="match status" value="1"/>
</dbReference>
<dbReference type="Pfam" id="PF13625">
    <property type="entry name" value="Helicase_C_3"/>
    <property type="match status" value="1"/>
</dbReference>
<dbReference type="Pfam" id="PF04851">
    <property type="entry name" value="ResIII"/>
    <property type="match status" value="1"/>
</dbReference>
<dbReference type="PRINTS" id="PR00851">
    <property type="entry name" value="XRODRMPGMNTB"/>
</dbReference>
<dbReference type="SMART" id="SM00487">
    <property type="entry name" value="DEXDc"/>
    <property type="match status" value="1"/>
</dbReference>
<dbReference type="SMART" id="SM00490">
    <property type="entry name" value="HELICc"/>
    <property type="match status" value="1"/>
</dbReference>
<dbReference type="SUPFAM" id="SSF52540">
    <property type="entry name" value="P-loop containing nucleoside triphosphate hydrolases"/>
    <property type="match status" value="2"/>
</dbReference>
<dbReference type="PROSITE" id="PS51192">
    <property type="entry name" value="HELICASE_ATP_BIND_1"/>
    <property type="match status" value="1"/>
</dbReference>
<dbReference type="PROSITE" id="PS51194">
    <property type="entry name" value="HELICASE_CTER"/>
    <property type="match status" value="1"/>
</dbReference>
<organism>
    <name type="scientific">Dictyostelium discoideum</name>
    <name type="common">Social amoeba</name>
    <dbReference type="NCBI Taxonomy" id="44689"/>
    <lineage>
        <taxon>Eukaryota</taxon>
        <taxon>Amoebozoa</taxon>
        <taxon>Evosea</taxon>
        <taxon>Eumycetozoa</taxon>
        <taxon>Dictyostelia</taxon>
        <taxon>Dictyosteliales</taxon>
        <taxon>Dictyosteliaceae</taxon>
        <taxon>Dictyostelium</taxon>
    </lineage>
</organism>
<name>ERCC3_DICDI</name>